<name>PDX1_NEUCR</name>
<sequence>MTSTSTTTNGDSFTVKAGLAQMLKGGVIMDVTTPAEARIAEEAGACAVMALERIPSDIRAAGGVARMSNPSMIKEIQAAVTIPVMAKARIGHVTECRILEQLGVDYIDESEVLTPADDTYHVQKDQFKAPFVCGCRNLGEALRRIKEGAAMIRTKGEAGTGDVVEAVKHIRTVNAEIAQAKAALASGGELAVAKMAREIGADVELLKKTAELGRLPVVNFAAGGVATPADAALMMEFGCDGVFVGSGIFKDAKTPEHALQRARAVVKAVANWNDYGALVEACIEHGEAMKGISNAGMKPEERMAGRGW</sequence>
<reference key="1">
    <citation type="journal article" date="2001" name="Genetics">
        <title>Analysis of the pdx-1 (snz-1/sno-1) region of the Neurospora crassa genome. Correlation of pyridoxine-requiring phenotypes with mutations in two structural genes.</title>
        <authorList>
            <person name="Bean L.E."/>
            <person name="Dvorachek W.H. Jr."/>
            <person name="Braun E.L."/>
            <person name="Errett A."/>
            <person name="Saenz G.S."/>
            <person name="Giles M.D."/>
            <person name="Werner-Washburne M."/>
            <person name="Nelson M.A."/>
            <person name="Natvig D.O."/>
        </authorList>
    </citation>
    <scope>NUCLEOTIDE SEQUENCE [GENOMIC DNA]</scope>
    <source>
        <strain>ATCC 24698 / 74-OR23-1A / CBS 708.71 / DSM 1257 / FGSC 987</strain>
    </source>
</reference>
<reference key="2">
    <citation type="journal article" date="2003" name="Nature">
        <title>The genome sequence of the filamentous fungus Neurospora crassa.</title>
        <authorList>
            <person name="Galagan J.E."/>
            <person name="Calvo S.E."/>
            <person name="Borkovich K.A."/>
            <person name="Selker E.U."/>
            <person name="Read N.D."/>
            <person name="Jaffe D.B."/>
            <person name="FitzHugh W."/>
            <person name="Ma L.-J."/>
            <person name="Smirnov S."/>
            <person name="Purcell S."/>
            <person name="Rehman B."/>
            <person name="Elkins T."/>
            <person name="Engels R."/>
            <person name="Wang S."/>
            <person name="Nielsen C.B."/>
            <person name="Butler J."/>
            <person name="Endrizzi M."/>
            <person name="Qui D."/>
            <person name="Ianakiev P."/>
            <person name="Bell-Pedersen D."/>
            <person name="Nelson M.A."/>
            <person name="Werner-Washburne M."/>
            <person name="Selitrennikoff C.P."/>
            <person name="Kinsey J.A."/>
            <person name="Braun E.L."/>
            <person name="Zelter A."/>
            <person name="Schulte U."/>
            <person name="Kothe G.O."/>
            <person name="Jedd G."/>
            <person name="Mewes H.-W."/>
            <person name="Staben C."/>
            <person name="Marcotte E."/>
            <person name="Greenberg D."/>
            <person name="Roy A."/>
            <person name="Foley K."/>
            <person name="Naylor J."/>
            <person name="Stange-Thomann N."/>
            <person name="Barrett R."/>
            <person name="Gnerre S."/>
            <person name="Kamal M."/>
            <person name="Kamvysselis M."/>
            <person name="Mauceli E.W."/>
            <person name="Bielke C."/>
            <person name="Rudd S."/>
            <person name="Frishman D."/>
            <person name="Krystofova S."/>
            <person name="Rasmussen C."/>
            <person name="Metzenberg R.L."/>
            <person name="Perkins D.D."/>
            <person name="Kroken S."/>
            <person name="Cogoni C."/>
            <person name="Macino G."/>
            <person name="Catcheside D.E.A."/>
            <person name="Li W."/>
            <person name="Pratt R.J."/>
            <person name="Osmani S.A."/>
            <person name="DeSouza C.P.C."/>
            <person name="Glass N.L."/>
            <person name="Orbach M.J."/>
            <person name="Berglund J.A."/>
            <person name="Voelker R."/>
            <person name="Yarden O."/>
            <person name="Plamann M."/>
            <person name="Seiler S."/>
            <person name="Dunlap J.C."/>
            <person name="Radford A."/>
            <person name="Aramayo R."/>
            <person name="Natvig D.O."/>
            <person name="Alex L.A."/>
            <person name="Mannhaupt G."/>
            <person name="Ebbole D.J."/>
            <person name="Freitag M."/>
            <person name="Paulsen I."/>
            <person name="Sachs M.S."/>
            <person name="Lander E.S."/>
            <person name="Nusbaum C."/>
            <person name="Birren B.W."/>
        </authorList>
    </citation>
    <scope>NUCLEOTIDE SEQUENCE [LARGE SCALE GENOMIC DNA]</scope>
    <source>
        <strain>ATCC 24698 / 74-OR23-1A / CBS 708.71 / DSM 1257 / FGSC 987</strain>
    </source>
</reference>
<dbReference type="EC" id="4.3.3.6"/>
<dbReference type="EMBL" id="AF309689">
    <property type="protein sequence ID" value="AAK07850.1"/>
    <property type="molecule type" value="Genomic_DNA"/>
</dbReference>
<dbReference type="EMBL" id="CM002239">
    <property type="protein sequence ID" value="EAA33021.1"/>
    <property type="molecule type" value="Genomic_DNA"/>
</dbReference>
<dbReference type="RefSeq" id="XP_962257.1">
    <property type="nucleotide sequence ID" value="XM_957164.3"/>
</dbReference>
<dbReference type="SMR" id="Q9C1K6"/>
<dbReference type="FunCoup" id="Q9C1K6">
    <property type="interactions" value="233"/>
</dbReference>
<dbReference type="STRING" id="367110.Q9C1K6"/>
<dbReference type="PaxDb" id="5141-EFNCRP00000006310"/>
<dbReference type="EnsemblFungi" id="EAA33021">
    <property type="protein sequence ID" value="EAA33021"/>
    <property type="gene ID" value="NCU06550"/>
</dbReference>
<dbReference type="GeneID" id="3878415"/>
<dbReference type="KEGG" id="ncr:NCU06550"/>
<dbReference type="VEuPathDB" id="FungiDB:NCU06550"/>
<dbReference type="HOGENOM" id="CLU_055352_1_0_1"/>
<dbReference type="InParanoid" id="Q9C1K6"/>
<dbReference type="OMA" id="RYANRGW"/>
<dbReference type="OrthoDB" id="1660966at2759"/>
<dbReference type="UniPathway" id="UPA00245"/>
<dbReference type="Proteomes" id="UP000001805">
    <property type="component" value="Chromosome 4, Linkage Group IV"/>
</dbReference>
<dbReference type="GO" id="GO:0016843">
    <property type="term" value="F:amine-lyase activity"/>
    <property type="evidence" value="ECO:0000318"/>
    <property type="project" value="GO_Central"/>
</dbReference>
<dbReference type="GO" id="GO:0036381">
    <property type="term" value="F:pyridoxal 5'-phosphate synthase (glutamine hydrolysing) activity"/>
    <property type="evidence" value="ECO:0007669"/>
    <property type="project" value="UniProtKB-EC"/>
</dbReference>
<dbReference type="GO" id="GO:0006520">
    <property type="term" value="P:amino acid metabolic process"/>
    <property type="evidence" value="ECO:0000318"/>
    <property type="project" value="GO_Central"/>
</dbReference>
<dbReference type="GO" id="GO:0042823">
    <property type="term" value="P:pyridoxal phosphate biosynthetic process"/>
    <property type="evidence" value="ECO:0000318"/>
    <property type="project" value="GO_Central"/>
</dbReference>
<dbReference type="GO" id="GO:0008615">
    <property type="term" value="P:pyridoxine biosynthetic process"/>
    <property type="evidence" value="ECO:0000318"/>
    <property type="project" value="GO_Central"/>
</dbReference>
<dbReference type="CDD" id="cd04727">
    <property type="entry name" value="pdxS"/>
    <property type="match status" value="1"/>
</dbReference>
<dbReference type="FunFam" id="3.20.20.70:FF:000373">
    <property type="entry name" value="Putative pyridoxine biosynthesis protein pdx-1"/>
    <property type="match status" value="1"/>
</dbReference>
<dbReference type="Gene3D" id="3.20.20.70">
    <property type="entry name" value="Aldolase class I"/>
    <property type="match status" value="1"/>
</dbReference>
<dbReference type="HAMAP" id="MF_01824">
    <property type="entry name" value="PdxS"/>
    <property type="match status" value="1"/>
</dbReference>
<dbReference type="InterPro" id="IPR013785">
    <property type="entry name" value="Aldolase_TIM"/>
</dbReference>
<dbReference type="InterPro" id="IPR001852">
    <property type="entry name" value="PdxS/SNZ"/>
</dbReference>
<dbReference type="InterPro" id="IPR033755">
    <property type="entry name" value="PdxS/SNZ_N"/>
</dbReference>
<dbReference type="InterPro" id="IPR011060">
    <property type="entry name" value="RibuloseP-bd_barrel"/>
</dbReference>
<dbReference type="NCBIfam" id="NF003215">
    <property type="entry name" value="PRK04180.1"/>
    <property type="match status" value="1"/>
</dbReference>
<dbReference type="NCBIfam" id="TIGR00343">
    <property type="entry name" value="pyridoxal 5'-phosphate synthase lyase subunit PdxS"/>
    <property type="match status" value="1"/>
</dbReference>
<dbReference type="PANTHER" id="PTHR31829">
    <property type="entry name" value="PYRIDOXAL 5'-PHOSPHATE SYNTHASE SUBUNIT SNZ1-RELATED"/>
    <property type="match status" value="1"/>
</dbReference>
<dbReference type="PANTHER" id="PTHR31829:SF0">
    <property type="entry name" value="PYRIDOXAL 5'-PHOSPHATE SYNTHASE SUBUNIT SNZ1-RELATED"/>
    <property type="match status" value="1"/>
</dbReference>
<dbReference type="Pfam" id="PF01680">
    <property type="entry name" value="SOR_SNZ"/>
    <property type="match status" value="1"/>
</dbReference>
<dbReference type="PIRSF" id="PIRSF029271">
    <property type="entry name" value="Pdx1"/>
    <property type="match status" value="1"/>
</dbReference>
<dbReference type="SUPFAM" id="SSF51366">
    <property type="entry name" value="Ribulose-phoshate binding barrel"/>
    <property type="match status" value="1"/>
</dbReference>
<dbReference type="PROSITE" id="PS01235">
    <property type="entry name" value="PDXS_SNZ_1"/>
    <property type="match status" value="1"/>
</dbReference>
<dbReference type="PROSITE" id="PS51129">
    <property type="entry name" value="PDXS_SNZ_2"/>
    <property type="match status" value="1"/>
</dbReference>
<feature type="chain" id="PRO_0000109363" description="Probable pyridoxal 5'-phosphate synthase subunit pdx-1">
    <location>
        <begin position="1"/>
        <end position="308"/>
    </location>
</feature>
<feature type="active site" description="Schiff-base intermediate with D-ribose 5-phosphate" evidence="1">
    <location>
        <position position="87"/>
    </location>
</feature>
<feature type="binding site" evidence="1">
    <location>
        <position position="30"/>
    </location>
    <ligand>
        <name>D-ribose 5-phosphate</name>
        <dbReference type="ChEBI" id="CHEBI:78346"/>
    </ligand>
</feature>
<feature type="binding site" evidence="1">
    <location>
        <position position="159"/>
    </location>
    <ligand>
        <name>D-ribose 5-phosphate</name>
        <dbReference type="ChEBI" id="CHEBI:78346"/>
    </ligand>
</feature>
<feature type="binding site" evidence="2">
    <location>
        <position position="171"/>
    </location>
    <ligand>
        <name>D-glyceraldehyde 3-phosphate</name>
        <dbReference type="ChEBI" id="CHEBI:59776"/>
    </ligand>
</feature>
<feature type="binding site" evidence="1">
    <location>
        <position position="224"/>
    </location>
    <ligand>
        <name>D-ribose 5-phosphate</name>
        <dbReference type="ChEBI" id="CHEBI:78346"/>
    </ligand>
</feature>
<feature type="binding site" evidence="1">
    <location>
        <begin position="245"/>
        <end position="246"/>
    </location>
    <ligand>
        <name>D-ribose 5-phosphate</name>
        <dbReference type="ChEBI" id="CHEBI:78346"/>
    </ligand>
</feature>
<gene>
    <name type="primary">pdx-1</name>
    <name type="ORF">NCU06550</name>
</gene>
<comment type="function">
    <text evidence="2">Catalyzes the formation of pyridoxal 5'-phosphate from ribose 5-phosphate (RBP), glyceraldehyde 3-phosphate (G3P) and ammonia. The ammonia is provided by pdx-2. Can also use ribulose 5-phosphate and dihydroxyacetone phosphate as substrates, resulting from enzyme-catalyzed isomerization of RBP and G3P, respectively. Also plays an indirect role in resistance to singlet oxygen-generating photosensitizers.</text>
</comment>
<comment type="catalytic activity">
    <reaction evidence="2">
        <text>aldehydo-D-ribose 5-phosphate + D-glyceraldehyde 3-phosphate + L-glutamine = pyridoxal 5'-phosphate + L-glutamate + phosphate + 3 H2O + H(+)</text>
        <dbReference type="Rhea" id="RHEA:31507"/>
        <dbReference type="ChEBI" id="CHEBI:15377"/>
        <dbReference type="ChEBI" id="CHEBI:15378"/>
        <dbReference type="ChEBI" id="CHEBI:29985"/>
        <dbReference type="ChEBI" id="CHEBI:43474"/>
        <dbReference type="ChEBI" id="CHEBI:58273"/>
        <dbReference type="ChEBI" id="CHEBI:58359"/>
        <dbReference type="ChEBI" id="CHEBI:59776"/>
        <dbReference type="ChEBI" id="CHEBI:597326"/>
        <dbReference type="EC" id="4.3.3.6"/>
    </reaction>
</comment>
<comment type="pathway">
    <text>Cofactor biosynthesis; pyridoxal 5'-phosphate biosynthesis.</text>
</comment>
<comment type="similarity">
    <text evidence="3">Belongs to the PdxS/SNZ family.</text>
</comment>
<proteinExistence type="inferred from homology"/>
<keyword id="KW-0456">Lyase</keyword>
<keyword id="KW-0663">Pyridoxal phosphate</keyword>
<keyword id="KW-1185">Reference proteome</keyword>
<keyword id="KW-0704">Schiff base</keyword>
<protein>
    <recommendedName>
        <fullName>Probable pyridoxal 5'-phosphate synthase subunit pdx-1</fullName>
        <shortName>PLP synthase subunit pdx-1</shortName>
        <ecNumber>4.3.3.6</ecNumber>
    </recommendedName>
</protein>
<evidence type="ECO:0000250" key="1">
    <source>
        <dbReference type="UniProtKB" id="O59080"/>
    </source>
</evidence>
<evidence type="ECO:0000250" key="2">
    <source>
        <dbReference type="UniProtKB" id="Q03148"/>
    </source>
</evidence>
<evidence type="ECO:0000305" key="3"/>
<accession>Q9C1K6</accession>
<organism>
    <name type="scientific">Neurospora crassa (strain ATCC 24698 / 74-OR23-1A / CBS 708.71 / DSM 1257 / FGSC 987)</name>
    <dbReference type="NCBI Taxonomy" id="367110"/>
    <lineage>
        <taxon>Eukaryota</taxon>
        <taxon>Fungi</taxon>
        <taxon>Dikarya</taxon>
        <taxon>Ascomycota</taxon>
        <taxon>Pezizomycotina</taxon>
        <taxon>Sordariomycetes</taxon>
        <taxon>Sordariomycetidae</taxon>
        <taxon>Sordariales</taxon>
        <taxon>Sordariaceae</taxon>
        <taxon>Neurospora</taxon>
    </lineage>
</organism>